<sequence>MTLTKGSFTYSSGEEYRGEWKEGRRHGFGQLVFADGGTYLGHFENGLFNGFGVLTFSDGSRYEGEFSQGKFNGVGVFIRYDNMTFEGEFKNGRVDGFGLLTFPDGSHGIPRNEGLFENNKLLRREKCSAVVQRAQSASKSARNLTA</sequence>
<accession>Q6PGF2</accession>
<organism>
    <name type="scientific">Mus musculus</name>
    <name type="common">Mouse</name>
    <dbReference type="NCBI Taxonomy" id="10090"/>
    <lineage>
        <taxon>Eukaryota</taxon>
        <taxon>Metazoa</taxon>
        <taxon>Chordata</taxon>
        <taxon>Craniata</taxon>
        <taxon>Vertebrata</taxon>
        <taxon>Euteleostomi</taxon>
        <taxon>Mammalia</taxon>
        <taxon>Eutheria</taxon>
        <taxon>Euarchontoglires</taxon>
        <taxon>Glires</taxon>
        <taxon>Rodentia</taxon>
        <taxon>Myomorpha</taxon>
        <taxon>Muroidea</taxon>
        <taxon>Muridae</taxon>
        <taxon>Murinae</taxon>
        <taxon>Mus</taxon>
        <taxon>Mus</taxon>
    </lineage>
</organism>
<evidence type="ECO:0000250" key="1">
    <source>
        <dbReference type="UniProtKB" id="Q8NDC4"/>
    </source>
</evidence>
<evidence type="ECO:0000269" key="2">
    <source>
    </source>
</evidence>
<evidence type="ECO:0000269" key="3">
    <source>
    </source>
</evidence>
<evidence type="ECO:0007829" key="4">
    <source>
        <dbReference type="PDB" id="6JLE"/>
    </source>
</evidence>
<gene>
    <name type="primary">Morn4</name>
</gene>
<feature type="chain" id="PRO_0000279489" description="MORN repeat-containing protein 4">
    <location>
        <begin position="1"/>
        <end position="146"/>
    </location>
</feature>
<feature type="repeat" description="MORN 1">
    <location>
        <begin position="16"/>
        <end position="38"/>
    </location>
</feature>
<feature type="repeat" description="MORN 2">
    <location>
        <begin position="39"/>
        <end position="61"/>
    </location>
</feature>
<feature type="repeat" description="MORN 3">
    <location>
        <begin position="62"/>
        <end position="84"/>
    </location>
</feature>
<feature type="repeat" description="MORN 4">
    <location>
        <begin position="85"/>
        <end position="107"/>
    </location>
</feature>
<feature type="strand" evidence="4">
    <location>
        <begin position="4"/>
        <end position="9"/>
    </location>
</feature>
<feature type="strand" evidence="4">
    <location>
        <begin position="15"/>
        <end position="21"/>
    </location>
</feature>
<feature type="strand" evidence="4">
    <location>
        <begin position="24"/>
        <end position="32"/>
    </location>
</feature>
<feature type="strand" evidence="4">
    <location>
        <begin position="38"/>
        <end position="44"/>
    </location>
</feature>
<feature type="strand" evidence="4">
    <location>
        <begin position="47"/>
        <end position="55"/>
    </location>
</feature>
<feature type="strand" evidence="4">
    <location>
        <begin position="61"/>
        <end position="67"/>
    </location>
</feature>
<feature type="strand" evidence="4">
    <location>
        <begin position="70"/>
        <end position="78"/>
    </location>
</feature>
<feature type="strand" evidence="4">
    <location>
        <begin position="84"/>
        <end position="90"/>
    </location>
</feature>
<feature type="strand" evidence="4">
    <location>
        <begin position="93"/>
        <end position="101"/>
    </location>
</feature>
<feature type="turn" evidence="4">
    <location>
        <begin position="108"/>
        <end position="111"/>
    </location>
</feature>
<feature type="strand" evidence="4">
    <location>
        <begin position="113"/>
        <end position="117"/>
    </location>
</feature>
<feature type="strand" evidence="4">
    <location>
        <begin position="120"/>
        <end position="124"/>
    </location>
</feature>
<feature type="helix" evidence="4">
    <location>
        <begin position="128"/>
        <end position="142"/>
    </location>
</feature>
<dbReference type="EMBL" id="AK154147">
    <property type="protein sequence ID" value="BAE32407.1"/>
    <property type="molecule type" value="mRNA"/>
</dbReference>
<dbReference type="EMBL" id="AK159230">
    <property type="protein sequence ID" value="BAE34916.1"/>
    <property type="molecule type" value="mRNA"/>
</dbReference>
<dbReference type="CCDS" id="CCDS37990.1"/>
<dbReference type="RefSeq" id="NP_932776.1">
    <property type="nucleotide sequence ID" value="NM_198108.2"/>
</dbReference>
<dbReference type="RefSeq" id="XP_030106757.1">
    <property type="nucleotide sequence ID" value="XM_030250897.1"/>
</dbReference>
<dbReference type="PDB" id="6JLE">
    <property type="method" value="X-ray"/>
    <property type="resolution" value="1.55 A"/>
    <property type="chains" value="A=1-146"/>
</dbReference>
<dbReference type="PDBsum" id="6JLE"/>
<dbReference type="SMR" id="Q6PGF2"/>
<dbReference type="BioGRID" id="230476">
    <property type="interactions" value="2"/>
</dbReference>
<dbReference type="FunCoup" id="Q6PGF2">
    <property type="interactions" value="424"/>
</dbReference>
<dbReference type="STRING" id="10090.ENSMUSP00000062887"/>
<dbReference type="PaxDb" id="10090-ENSMUSP00000062887"/>
<dbReference type="PeptideAtlas" id="Q6PGF2"/>
<dbReference type="ProteomicsDB" id="252594"/>
<dbReference type="Antibodypedia" id="30988">
    <property type="antibodies" value="39 antibodies from 15 providers"/>
</dbReference>
<dbReference type="DNASU" id="226123"/>
<dbReference type="Ensembl" id="ENSMUST00000051772.10">
    <property type="protein sequence ID" value="ENSMUSP00000062887.9"/>
    <property type="gene ID" value="ENSMUSG00000049670.10"/>
</dbReference>
<dbReference type="GeneID" id="226123"/>
<dbReference type="KEGG" id="mmu:226123"/>
<dbReference type="UCSC" id="uc008hnd.1">
    <property type="organism name" value="mouse"/>
</dbReference>
<dbReference type="AGR" id="MGI:2449568"/>
<dbReference type="CTD" id="118812"/>
<dbReference type="MGI" id="MGI:2449568">
    <property type="gene designation" value="Morn4"/>
</dbReference>
<dbReference type="VEuPathDB" id="HostDB:ENSMUSG00000049670"/>
<dbReference type="eggNOG" id="KOG0231">
    <property type="taxonomic scope" value="Eukaryota"/>
</dbReference>
<dbReference type="GeneTree" id="ENSGT00730000111173"/>
<dbReference type="HOGENOM" id="CLU_113346_0_0_1"/>
<dbReference type="InParanoid" id="Q6PGF2"/>
<dbReference type="OMA" id="FTRCDGM"/>
<dbReference type="OrthoDB" id="406044at2759"/>
<dbReference type="PhylomeDB" id="Q6PGF2"/>
<dbReference type="TreeFam" id="TF323893"/>
<dbReference type="BioGRID-ORCS" id="226123">
    <property type="hits" value="2 hits in 75 CRISPR screens"/>
</dbReference>
<dbReference type="ChiTaRS" id="Morn4">
    <property type="organism name" value="mouse"/>
</dbReference>
<dbReference type="PRO" id="PR:Q6PGF2"/>
<dbReference type="Proteomes" id="UP000000589">
    <property type="component" value="Chromosome 19"/>
</dbReference>
<dbReference type="RNAct" id="Q6PGF2">
    <property type="molecule type" value="protein"/>
</dbReference>
<dbReference type="Bgee" id="ENSMUSG00000049670">
    <property type="expression patterns" value="Expressed in cortical plate and 218 other cell types or tissues"/>
</dbReference>
<dbReference type="GO" id="GO:0005737">
    <property type="term" value="C:cytoplasm"/>
    <property type="evidence" value="ECO:0000250"/>
    <property type="project" value="UniProtKB"/>
</dbReference>
<dbReference type="GO" id="GO:0032433">
    <property type="term" value="C:filopodium tip"/>
    <property type="evidence" value="ECO:0000250"/>
    <property type="project" value="UniProtKB"/>
</dbReference>
<dbReference type="GO" id="GO:0032426">
    <property type="term" value="C:stereocilium tip"/>
    <property type="evidence" value="ECO:0000314"/>
    <property type="project" value="UniProtKB"/>
</dbReference>
<dbReference type="GO" id="GO:0048678">
    <property type="term" value="P:response to axon injury"/>
    <property type="evidence" value="ECO:0000315"/>
    <property type="project" value="UniProtKB"/>
</dbReference>
<dbReference type="FunFam" id="2.20.110.10:FF:000011">
    <property type="entry name" value="MORN repeat-containing protein 4"/>
    <property type="match status" value="1"/>
</dbReference>
<dbReference type="FunFam" id="2.20.110.10:FF:000014">
    <property type="entry name" value="MORN repeat-containing protein 4"/>
    <property type="match status" value="1"/>
</dbReference>
<dbReference type="Gene3D" id="2.20.110.10">
    <property type="entry name" value="Histone H3 K4-specific methyltransferase SET7/9 N-terminal domain"/>
    <property type="match status" value="2"/>
</dbReference>
<dbReference type="InterPro" id="IPR003409">
    <property type="entry name" value="MORN"/>
</dbReference>
<dbReference type="InterPro" id="IPR052315">
    <property type="entry name" value="MORN4"/>
</dbReference>
<dbReference type="PANTHER" id="PTHR46614">
    <property type="entry name" value="MORN REPEAT-CONTAINING PROTEIN 4"/>
    <property type="match status" value="1"/>
</dbReference>
<dbReference type="PANTHER" id="PTHR46614:SF1">
    <property type="entry name" value="MORN REPEAT-CONTAINING PROTEIN 4"/>
    <property type="match status" value="1"/>
</dbReference>
<dbReference type="Pfam" id="PF02493">
    <property type="entry name" value="MORN"/>
    <property type="match status" value="4"/>
</dbReference>
<dbReference type="SMART" id="SM00698">
    <property type="entry name" value="MORN"/>
    <property type="match status" value="4"/>
</dbReference>
<dbReference type="SUPFAM" id="SSF82185">
    <property type="entry name" value="Histone H3 K4-specific methyltransferase SET7/9 N-terminal domain"/>
    <property type="match status" value="1"/>
</dbReference>
<keyword id="KW-0002">3D-structure</keyword>
<keyword id="KW-0966">Cell projection</keyword>
<keyword id="KW-0963">Cytoplasm</keyword>
<keyword id="KW-1185">Reference proteome</keyword>
<keyword id="KW-0677">Repeat</keyword>
<reference key="1">
    <citation type="journal article" date="2005" name="Science">
        <title>The transcriptional landscape of the mammalian genome.</title>
        <authorList>
            <person name="Carninci P."/>
            <person name="Kasukawa T."/>
            <person name="Katayama S."/>
            <person name="Gough J."/>
            <person name="Frith M.C."/>
            <person name="Maeda N."/>
            <person name="Oyama R."/>
            <person name="Ravasi T."/>
            <person name="Lenhard B."/>
            <person name="Wells C."/>
            <person name="Kodzius R."/>
            <person name="Shimokawa K."/>
            <person name="Bajic V.B."/>
            <person name="Brenner S.E."/>
            <person name="Batalov S."/>
            <person name="Forrest A.R."/>
            <person name="Zavolan M."/>
            <person name="Davis M.J."/>
            <person name="Wilming L.G."/>
            <person name="Aidinis V."/>
            <person name="Allen J.E."/>
            <person name="Ambesi-Impiombato A."/>
            <person name="Apweiler R."/>
            <person name="Aturaliya R.N."/>
            <person name="Bailey T.L."/>
            <person name="Bansal M."/>
            <person name="Baxter L."/>
            <person name="Beisel K.W."/>
            <person name="Bersano T."/>
            <person name="Bono H."/>
            <person name="Chalk A.M."/>
            <person name="Chiu K.P."/>
            <person name="Choudhary V."/>
            <person name="Christoffels A."/>
            <person name="Clutterbuck D.R."/>
            <person name="Crowe M.L."/>
            <person name="Dalla E."/>
            <person name="Dalrymple B.P."/>
            <person name="de Bono B."/>
            <person name="Della Gatta G."/>
            <person name="di Bernardo D."/>
            <person name="Down T."/>
            <person name="Engstrom P."/>
            <person name="Fagiolini M."/>
            <person name="Faulkner G."/>
            <person name="Fletcher C.F."/>
            <person name="Fukushima T."/>
            <person name="Furuno M."/>
            <person name="Futaki S."/>
            <person name="Gariboldi M."/>
            <person name="Georgii-Hemming P."/>
            <person name="Gingeras T.R."/>
            <person name="Gojobori T."/>
            <person name="Green R.E."/>
            <person name="Gustincich S."/>
            <person name="Harbers M."/>
            <person name="Hayashi Y."/>
            <person name="Hensch T.K."/>
            <person name="Hirokawa N."/>
            <person name="Hill D."/>
            <person name="Huminiecki L."/>
            <person name="Iacono M."/>
            <person name="Ikeo K."/>
            <person name="Iwama A."/>
            <person name="Ishikawa T."/>
            <person name="Jakt M."/>
            <person name="Kanapin A."/>
            <person name="Katoh M."/>
            <person name="Kawasawa Y."/>
            <person name="Kelso J."/>
            <person name="Kitamura H."/>
            <person name="Kitano H."/>
            <person name="Kollias G."/>
            <person name="Krishnan S.P."/>
            <person name="Kruger A."/>
            <person name="Kummerfeld S.K."/>
            <person name="Kurochkin I.V."/>
            <person name="Lareau L.F."/>
            <person name="Lazarevic D."/>
            <person name="Lipovich L."/>
            <person name="Liu J."/>
            <person name="Liuni S."/>
            <person name="McWilliam S."/>
            <person name="Madan Babu M."/>
            <person name="Madera M."/>
            <person name="Marchionni L."/>
            <person name="Matsuda H."/>
            <person name="Matsuzawa S."/>
            <person name="Miki H."/>
            <person name="Mignone F."/>
            <person name="Miyake S."/>
            <person name="Morris K."/>
            <person name="Mottagui-Tabar S."/>
            <person name="Mulder N."/>
            <person name="Nakano N."/>
            <person name="Nakauchi H."/>
            <person name="Ng P."/>
            <person name="Nilsson R."/>
            <person name="Nishiguchi S."/>
            <person name="Nishikawa S."/>
            <person name="Nori F."/>
            <person name="Ohara O."/>
            <person name="Okazaki Y."/>
            <person name="Orlando V."/>
            <person name="Pang K.C."/>
            <person name="Pavan W.J."/>
            <person name="Pavesi G."/>
            <person name="Pesole G."/>
            <person name="Petrovsky N."/>
            <person name="Piazza S."/>
            <person name="Reed J."/>
            <person name="Reid J.F."/>
            <person name="Ring B.Z."/>
            <person name="Ringwald M."/>
            <person name="Rost B."/>
            <person name="Ruan Y."/>
            <person name="Salzberg S.L."/>
            <person name="Sandelin A."/>
            <person name="Schneider C."/>
            <person name="Schoenbach C."/>
            <person name="Sekiguchi K."/>
            <person name="Semple C.A."/>
            <person name="Seno S."/>
            <person name="Sessa L."/>
            <person name="Sheng Y."/>
            <person name="Shibata Y."/>
            <person name="Shimada H."/>
            <person name="Shimada K."/>
            <person name="Silva D."/>
            <person name="Sinclair B."/>
            <person name="Sperling S."/>
            <person name="Stupka E."/>
            <person name="Sugiura K."/>
            <person name="Sultana R."/>
            <person name="Takenaka Y."/>
            <person name="Taki K."/>
            <person name="Tammoja K."/>
            <person name="Tan S.L."/>
            <person name="Tang S."/>
            <person name="Taylor M.S."/>
            <person name="Tegner J."/>
            <person name="Teichmann S.A."/>
            <person name="Ueda H.R."/>
            <person name="van Nimwegen E."/>
            <person name="Verardo R."/>
            <person name="Wei C.L."/>
            <person name="Yagi K."/>
            <person name="Yamanishi H."/>
            <person name="Zabarovsky E."/>
            <person name="Zhu S."/>
            <person name="Zimmer A."/>
            <person name="Hide W."/>
            <person name="Bult C."/>
            <person name="Grimmond S.M."/>
            <person name="Teasdale R.D."/>
            <person name="Liu E.T."/>
            <person name="Brusic V."/>
            <person name="Quackenbush J."/>
            <person name="Wahlestedt C."/>
            <person name="Mattick J.S."/>
            <person name="Hume D.A."/>
            <person name="Kai C."/>
            <person name="Sasaki D."/>
            <person name="Tomaru Y."/>
            <person name="Fukuda S."/>
            <person name="Kanamori-Katayama M."/>
            <person name="Suzuki M."/>
            <person name="Aoki J."/>
            <person name="Arakawa T."/>
            <person name="Iida J."/>
            <person name="Imamura K."/>
            <person name="Itoh M."/>
            <person name="Kato T."/>
            <person name="Kawaji H."/>
            <person name="Kawagashira N."/>
            <person name="Kawashima T."/>
            <person name="Kojima M."/>
            <person name="Kondo S."/>
            <person name="Konno H."/>
            <person name="Nakano K."/>
            <person name="Ninomiya N."/>
            <person name="Nishio T."/>
            <person name="Okada M."/>
            <person name="Plessy C."/>
            <person name="Shibata K."/>
            <person name="Shiraki T."/>
            <person name="Suzuki S."/>
            <person name="Tagami M."/>
            <person name="Waki K."/>
            <person name="Watahiki A."/>
            <person name="Okamura-Oho Y."/>
            <person name="Suzuki H."/>
            <person name="Kawai J."/>
            <person name="Hayashizaki Y."/>
        </authorList>
    </citation>
    <scope>NUCLEOTIDE SEQUENCE [LARGE SCALE MRNA]</scope>
    <source>
        <strain>C57BL/6J</strain>
        <strain>NOD</strain>
    </source>
</reference>
<reference key="2">
    <citation type="journal article" date="2012" name="J. Neurosci.">
        <title>A model of toxic neuropathy in Drosophila reveals a role for MORN4 in promoting axonal degeneration.</title>
        <authorList>
            <person name="Bhattacharya M.R."/>
            <person name="Gerdts J."/>
            <person name="Naylor S.A."/>
            <person name="Royse E.X."/>
            <person name="Ebstein S.Y."/>
            <person name="Sasaki Y."/>
            <person name="Milbrandt J."/>
            <person name="DiAntonio A."/>
        </authorList>
    </citation>
    <scope>FUNCTION</scope>
    <scope>DISRUPTION PHENOTYPE</scope>
</reference>
<reference key="3">
    <citation type="journal article" date="2016" name="J. Cell Biol.">
        <title>Class III myosins shape the auditory hair bundles by limiting microvilli and stereocilia growth.</title>
        <authorList>
            <person name="Lelli A."/>
            <person name="Michel V."/>
            <person name="Boutet de Monvel J."/>
            <person name="Cortese M."/>
            <person name="Bosch-Grau M."/>
            <person name="Aghaie A."/>
            <person name="Perfettini I."/>
            <person name="Dupont T."/>
            <person name="Avan P."/>
            <person name="El-Amraoui A."/>
            <person name="Petit C."/>
        </authorList>
    </citation>
    <scope>INTERACTION WITH MYO3A</scope>
    <scope>SUBCELLULAR LOCATION</scope>
</reference>
<proteinExistence type="evidence at protein level"/>
<name>MORN4_MOUSE</name>
<comment type="function">
    <text evidence="2">Plays a role in promoting axonal degeneration following neuronal injury by toxic insult or trauma.</text>
</comment>
<comment type="subunit">
    <text evidence="3">Interacts with MYO3A.</text>
</comment>
<comment type="subcellular location">
    <subcellularLocation>
        <location evidence="1">Cytoplasm</location>
    </subcellularLocation>
    <subcellularLocation>
        <location evidence="1">Cell projection</location>
        <location evidence="1">Filopodium tip</location>
    </subcellularLocation>
    <subcellularLocation>
        <location evidence="3">Cell projection</location>
        <location evidence="3">Stereocilium</location>
    </subcellularLocation>
    <text evidence="1">Found in the cytoplasm in the absence of MYO3A and localizes at filopodial tips in the presence of MYO3A.</text>
</comment>
<comment type="disruption phenotype">
    <text evidence="2">Severed Morn4 null axons show significantly reduced and delayed axonal degeneration following axotomy and protection is evident for at least 72 hrs, whereas wild-type axons degenerate within the first 12 hrs.</text>
</comment>
<protein>
    <recommendedName>
        <fullName>MORN repeat-containing protein 4</fullName>
    </recommendedName>
</protein>